<protein>
    <recommendedName>
        <fullName evidence="1">Tetraacyldisaccharide 4'-kinase</fullName>
        <ecNumber evidence="1">2.7.1.130</ecNumber>
    </recommendedName>
    <alternativeName>
        <fullName evidence="1">Lipid A 4'-kinase</fullName>
    </alternativeName>
</protein>
<reference key="1">
    <citation type="journal article" date="2009" name="Infect. Immun.">
        <title>Comparative genomics reveal extensive transposon-mediated genomic plasticity and diversity among potential effector proteins within the genus Coxiella.</title>
        <authorList>
            <person name="Beare P.A."/>
            <person name="Unsworth N."/>
            <person name="Andoh M."/>
            <person name="Voth D.E."/>
            <person name="Omsland A."/>
            <person name="Gilk S.D."/>
            <person name="Williams K.P."/>
            <person name="Sobral B.W."/>
            <person name="Kupko J.J. III"/>
            <person name="Porcella S.F."/>
            <person name="Samuel J.E."/>
            <person name="Heinzen R.A."/>
        </authorList>
    </citation>
    <scope>NUCLEOTIDE SEQUENCE [LARGE SCALE GENOMIC DNA]</scope>
    <source>
        <strain>Dugway 5J108-111</strain>
    </source>
</reference>
<name>LPXK_COXBN</name>
<feature type="chain" id="PRO_1000080465" description="Tetraacyldisaccharide 4'-kinase">
    <location>
        <begin position="1"/>
        <end position="325"/>
    </location>
</feature>
<feature type="binding site" evidence="1">
    <location>
        <begin position="58"/>
        <end position="65"/>
    </location>
    <ligand>
        <name>ATP</name>
        <dbReference type="ChEBI" id="CHEBI:30616"/>
    </ligand>
</feature>
<organism>
    <name type="scientific">Coxiella burnetii (strain Dugway 5J108-111)</name>
    <dbReference type="NCBI Taxonomy" id="434922"/>
    <lineage>
        <taxon>Bacteria</taxon>
        <taxon>Pseudomonadati</taxon>
        <taxon>Pseudomonadota</taxon>
        <taxon>Gammaproteobacteria</taxon>
        <taxon>Legionellales</taxon>
        <taxon>Coxiellaceae</taxon>
        <taxon>Coxiella</taxon>
    </lineage>
</organism>
<gene>
    <name evidence="1" type="primary">lpxK</name>
    <name type="ordered locus">CBUD_0923</name>
</gene>
<accession>A9KFL0</accession>
<proteinExistence type="inferred from homology"/>
<evidence type="ECO:0000255" key="1">
    <source>
        <dbReference type="HAMAP-Rule" id="MF_00409"/>
    </source>
</evidence>
<sequence length="325" mass="36873">MLKAPRFWYQPRSLLGGILSPFSFLYQIIVRIRRGLYAVGLKKISKFPVPIVIVGNITVGGSGKTPFVIWLANELKNRGFRPGVVSRGYGGKANRFPQTVTENSDPLQVGDEAVLLMKKIDCPMVVCRDRGAAVKHLLRNFQCDVVIGDDGLQHYSLGRDLEIALLDDRHLGNGRCLPAGPLREPKSRLNTVDFVVPKQLRPNEIYQLKNPAKKIDFNELKELTVHAVAGIGNPGYFFKQLETLGANVIAHPFRDHYFYRSEDFNFDDDHLIILTEKDAIKCKQFDDERLFCFSVDAVVPDQFQNDFFRLISNIILRKQAQREGI</sequence>
<keyword id="KW-0067">ATP-binding</keyword>
<keyword id="KW-0418">Kinase</keyword>
<keyword id="KW-0441">Lipid A biosynthesis</keyword>
<keyword id="KW-0444">Lipid biosynthesis</keyword>
<keyword id="KW-0443">Lipid metabolism</keyword>
<keyword id="KW-0547">Nucleotide-binding</keyword>
<keyword id="KW-0808">Transferase</keyword>
<dbReference type="EC" id="2.7.1.130" evidence="1"/>
<dbReference type="EMBL" id="CP000733">
    <property type="protein sequence ID" value="ABS76690.1"/>
    <property type="molecule type" value="Genomic_DNA"/>
</dbReference>
<dbReference type="RefSeq" id="WP_010957852.1">
    <property type="nucleotide sequence ID" value="NC_009727.1"/>
</dbReference>
<dbReference type="SMR" id="A9KFL0"/>
<dbReference type="KEGG" id="cbd:CBUD_0923"/>
<dbReference type="HOGENOM" id="CLU_038816_2_0_6"/>
<dbReference type="UniPathway" id="UPA00359">
    <property type="reaction ID" value="UER00482"/>
</dbReference>
<dbReference type="Proteomes" id="UP000008555">
    <property type="component" value="Chromosome"/>
</dbReference>
<dbReference type="GO" id="GO:0005886">
    <property type="term" value="C:plasma membrane"/>
    <property type="evidence" value="ECO:0007669"/>
    <property type="project" value="TreeGrafter"/>
</dbReference>
<dbReference type="GO" id="GO:0005524">
    <property type="term" value="F:ATP binding"/>
    <property type="evidence" value="ECO:0007669"/>
    <property type="project" value="UniProtKB-UniRule"/>
</dbReference>
<dbReference type="GO" id="GO:0009029">
    <property type="term" value="F:tetraacyldisaccharide 4'-kinase activity"/>
    <property type="evidence" value="ECO:0007669"/>
    <property type="project" value="UniProtKB-UniRule"/>
</dbReference>
<dbReference type="GO" id="GO:0009245">
    <property type="term" value="P:lipid A biosynthetic process"/>
    <property type="evidence" value="ECO:0007669"/>
    <property type="project" value="UniProtKB-UniRule"/>
</dbReference>
<dbReference type="GO" id="GO:0009244">
    <property type="term" value="P:lipopolysaccharide core region biosynthetic process"/>
    <property type="evidence" value="ECO:0007669"/>
    <property type="project" value="TreeGrafter"/>
</dbReference>
<dbReference type="CDD" id="cd01983">
    <property type="entry name" value="SIMIBI"/>
    <property type="match status" value="1"/>
</dbReference>
<dbReference type="HAMAP" id="MF_00409">
    <property type="entry name" value="LpxK"/>
    <property type="match status" value="1"/>
</dbReference>
<dbReference type="InterPro" id="IPR003758">
    <property type="entry name" value="LpxK"/>
</dbReference>
<dbReference type="InterPro" id="IPR027417">
    <property type="entry name" value="P-loop_NTPase"/>
</dbReference>
<dbReference type="NCBIfam" id="TIGR00682">
    <property type="entry name" value="lpxK"/>
    <property type="match status" value="1"/>
</dbReference>
<dbReference type="PANTHER" id="PTHR42724">
    <property type="entry name" value="TETRAACYLDISACCHARIDE 4'-KINASE"/>
    <property type="match status" value="1"/>
</dbReference>
<dbReference type="PANTHER" id="PTHR42724:SF1">
    <property type="entry name" value="TETRAACYLDISACCHARIDE 4'-KINASE, MITOCHONDRIAL-RELATED"/>
    <property type="match status" value="1"/>
</dbReference>
<dbReference type="Pfam" id="PF02606">
    <property type="entry name" value="LpxK"/>
    <property type="match status" value="1"/>
</dbReference>
<dbReference type="SUPFAM" id="SSF52540">
    <property type="entry name" value="P-loop containing nucleoside triphosphate hydrolases"/>
    <property type="match status" value="1"/>
</dbReference>
<comment type="function">
    <text evidence="1">Transfers the gamma-phosphate of ATP to the 4'-position of a tetraacyldisaccharide 1-phosphate intermediate (termed DS-1-P) to form tetraacyldisaccharide 1,4'-bis-phosphate (lipid IVA).</text>
</comment>
<comment type="catalytic activity">
    <reaction evidence="1">
        <text>a lipid A disaccharide + ATP = a lipid IVA + ADP + H(+)</text>
        <dbReference type="Rhea" id="RHEA:67840"/>
        <dbReference type="ChEBI" id="CHEBI:15378"/>
        <dbReference type="ChEBI" id="CHEBI:30616"/>
        <dbReference type="ChEBI" id="CHEBI:176343"/>
        <dbReference type="ChEBI" id="CHEBI:176425"/>
        <dbReference type="ChEBI" id="CHEBI:456216"/>
        <dbReference type="EC" id="2.7.1.130"/>
    </reaction>
</comment>
<comment type="pathway">
    <text evidence="1">Glycolipid biosynthesis; lipid IV(A) biosynthesis; lipid IV(A) from (3R)-3-hydroxytetradecanoyl-[acyl-carrier-protein] and UDP-N-acetyl-alpha-D-glucosamine: step 6/6.</text>
</comment>
<comment type="similarity">
    <text evidence="1">Belongs to the LpxK family.</text>
</comment>